<sequence>MAVSKQVIATEAITRKVDLDNPKVVAKLKKNMGHMTYGEPAWPNDLLFMFPVVILGTIGVIVGLSVMDPAGVGEPADPFATPLEILPEWYLYPAFHILRIAPNKLLGIALMSAIPVGLLFVPFIENVNKFQNPLRRPVATTVFLIGTLVTLYLGIGATLPLDKWVTLGLF</sequence>
<gene>
    <name evidence="1" type="primary">petD</name>
    <name type="ordered locus">CYB_1630</name>
</gene>
<comment type="function">
    <text evidence="1">Component of the cytochrome b6-f complex, which mediates electron transfer between photosystem II (PSII) and photosystem I (PSI), cyclic electron flow around PSI, and state transitions.</text>
</comment>
<comment type="subunit">
    <text evidence="1">The 4 large subunits of the cytochrome b6-f complex are cytochrome b6, subunit IV (17 kDa polypeptide, PetD), cytochrome f and the Rieske protein, while the 4 small subunits are PetG, PetL, PetM and PetN. The complex functions as a dimer.</text>
</comment>
<comment type="subcellular location">
    <subcellularLocation>
        <location evidence="1">Cellular thylakoid membrane</location>
        <topology evidence="1">Multi-pass membrane protein</topology>
    </subcellularLocation>
</comment>
<comment type="similarity">
    <text evidence="1">Belongs to the cytochrome b family. PetD subfamily.</text>
</comment>
<name>PETD_SYNJB</name>
<feature type="chain" id="PRO_0000255577" description="Cytochrome b6-f complex subunit 4">
    <location>
        <begin position="1"/>
        <end position="170"/>
    </location>
</feature>
<feature type="transmembrane region" description="Helical" evidence="1">
    <location>
        <begin position="46"/>
        <end position="66"/>
    </location>
</feature>
<feature type="transmembrane region" description="Helical" evidence="1">
    <location>
        <begin position="105"/>
        <end position="125"/>
    </location>
</feature>
<feature type="transmembrane region" description="Helical" evidence="1">
    <location>
        <begin position="141"/>
        <end position="161"/>
    </location>
</feature>
<accession>Q2JL31</accession>
<keyword id="KW-0249">Electron transport</keyword>
<keyword id="KW-0472">Membrane</keyword>
<keyword id="KW-0602">Photosynthesis</keyword>
<keyword id="KW-1185">Reference proteome</keyword>
<keyword id="KW-0793">Thylakoid</keyword>
<keyword id="KW-0812">Transmembrane</keyword>
<keyword id="KW-1133">Transmembrane helix</keyword>
<keyword id="KW-0813">Transport</keyword>
<reference key="1">
    <citation type="journal article" date="2007" name="ISME J.">
        <title>Population level functional diversity in a microbial community revealed by comparative genomic and metagenomic analyses.</title>
        <authorList>
            <person name="Bhaya D."/>
            <person name="Grossman A.R."/>
            <person name="Steunou A.-S."/>
            <person name="Khuri N."/>
            <person name="Cohan F.M."/>
            <person name="Hamamura N."/>
            <person name="Melendrez M.C."/>
            <person name="Bateson M.M."/>
            <person name="Ward D.M."/>
            <person name="Heidelberg J.F."/>
        </authorList>
    </citation>
    <scope>NUCLEOTIDE SEQUENCE [LARGE SCALE GENOMIC DNA]</scope>
    <source>
        <strain>JA-2-3B'a(2-13)</strain>
    </source>
</reference>
<proteinExistence type="inferred from homology"/>
<protein>
    <recommendedName>
        <fullName evidence="1">Cytochrome b6-f complex subunit 4</fullName>
    </recommendedName>
    <alternativeName>
        <fullName evidence="1">17 kDa polypeptide</fullName>
    </alternativeName>
</protein>
<organism>
    <name type="scientific">Synechococcus sp. (strain JA-2-3B'a(2-13))</name>
    <name type="common">Cyanobacteria bacterium Yellowstone B-Prime</name>
    <dbReference type="NCBI Taxonomy" id="321332"/>
    <lineage>
        <taxon>Bacteria</taxon>
        <taxon>Bacillati</taxon>
        <taxon>Cyanobacteriota</taxon>
        <taxon>Cyanophyceae</taxon>
        <taxon>Synechococcales</taxon>
        <taxon>Synechococcaceae</taxon>
        <taxon>Synechococcus</taxon>
    </lineage>
</organism>
<evidence type="ECO:0000255" key="1">
    <source>
        <dbReference type="HAMAP-Rule" id="MF_01344"/>
    </source>
</evidence>
<dbReference type="EMBL" id="CP000240">
    <property type="protein sequence ID" value="ABD02591.1"/>
    <property type="molecule type" value="Genomic_DNA"/>
</dbReference>
<dbReference type="RefSeq" id="WP_011433236.1">
    <property type="nucleotide sequence ID" value="NC_007776.1"/>
</dbReference>
<dbReference type="SMR" id="Q2JL31"/>
<dbReference type="STRING" id="321332.CYB_1630"/>
<dbReference type="KEGG" id="cyb:CYB_1630"/>
<dbReference type="eggNOG" id="COG1290">
    <property type="taxonomic scope" value="Bacteria"/>
</dbReference>
<dbReference type="HOGENOM" id="CLU_112652_0_0_3"/>
<dbReference type="OrthoDB" id="529454at2"/>
<dbReference type="Proteomes" id="UP000001938">
    <property type="component" value="Chromosome"/>
</dbReference>
<dbReference type="GO" id="GO:0031676">
    <property type="term" value="C:plasma membrane-derived thylakoid membrane"/>
    <property type="evidence" value="ECO:0007669"/>
    <property type="project" value="UniProtKB-SubCell"/>
</dbReference>
<dbReference type="GO" id="GO:0045158">
    <property type="term" value="F:electron transporter, transferring electrons within cytochrome b6/f complex of photosystem II activity"/>
    <property type="evidence" value="ECO:0007669"/>
    <property type="project" value="UniProtKB-UniRule"/>
</dbReference>
<dbReference type="GO" id="GO:0045156">
    <property type="term" value="F:electron transporter, transferring electrons within the cyclic electron transport pathway of photosynthesis activity"/>
    <property type="evidence" value="ECO:0007669"/>
    <property type="project" value="InterPro"/>
</dbReference>
<dbReference type="GO" id="GO:0016491">
    <property type="term" value="F:oxidoreductase activity"/>
    <property type="evidence" value="ECO:0007669"/>
    <property type="project" value="InterPro"/>
</dbReference>
<dbReference type="GO" id="GO:0009767">
    <property type="term" value="P:photosynthetic electron transport chain"/>
    <property type="evidence" value="ECO:0007669"/>
    <property type="project" value="InterPro"/>
</dbReference>
<dbReference type="CDD" id="cd00290">
    <property type="entry name" value="cytochrome_b_C"/>
    <property type="match status" value="1"/>
</dbReference>
<dbReference type="FunFam" id="1.10.287.980:FF:000001">
    <property type="entry name" value="Cytochrome b6-f complex subunit 4"/>
    <property type="match status" value="1"/>
</dbReference>
<dbReference type="Gene3D" id="1.10.287.980">
    <property type="entry name" value="plastocyanin oxidoreductase"/>
    <property type="match status" value="1"/>
</dbReference>
<dbReference type="Gene3D" id="1.20.5.510">
    <property type="entry name" value="Single helix bin"/>
    <property type="match status" value="1"/>
</dbReference>
<dbReference type="HAMAP" id="MF_01344">
    <property type="entry name" value="Cytb6_f_subIV"/>
    <property type="match status" value="1"/>
</dbReference>
<dbReference type="InterPro" id="IPR005798">
    <property type="entry name" value="Cyt_b/b6_C"/>
</dbReference>
<dbReference type="InterPro" id="IPR036150">
    <property type="entry name" value="Cyt_b/b6_C_sf"/>
</dbReference>
<dbReference type="InterPro" id="IPR005870">
    <property type="entry name" value="Cyt_b6/f_cplx_suIV"/>
</dbReference>
<dbReference type="InterPro" id="IPR048260">
    <property type="entry name" value="Cytochrome_b_C_euk/bac"/>
</dbReference>
<dbReference type="NCBIfam" id="TIGR01156">
    <property type="entry name" value="cytb6_f_IV"/>
    <property type="match status" value="1"/>
</dbReference>
<dbReference type="PANTHER" id="PTHR19271">
    <property type="entry name" value="CYTOCHROME B"/>
    <property type="match status" value="1"/>
</dbReference>
<dbReference type="PANTHER" id="PTHR19271:SF16">
    <property type="entry name" value="CYTOCHROME B"/>
    <property type="match status" value="1"/>
</dbReference>
<dbReference type="Pfam" id="PF00032">
    <property type="entry name" value="Cytochrom_B_C"/>
    <property type="match status" value="1"/>
</dbReference>
<dbReference type="PIRSF" id="PIRSF000033">
    <property type="entry name" value="B6f_17K"/>
    <property type="match status" value="1"/>
</dbReference>
<dbReference type="SUPFAM" id="SSF81648">
    <property type="entry name" value="a domain/subunit of cytochrome bc1 complex (Ubiquinol-cytochrome c reductase)"/>
    <property type="match status" value="1"/>
</dbReference>
<dbReference type="PROSITE" id="PS51003">
    <property type="entry name" value="CYTB_CTER"/>
    <property type="match status" value="1"/>
</dbReference>